<dbReference type="EMBL" id="CP000675">
    <property type="protein sequence ID" value="ABQ55919.1"/>
    <property type="molecule type" value="Genomic_DNA"/>
</dbReference>
<dbReference type="SMR" id="A5IEW9"/>
<dbReference type="KEGG" id="lpc:LPC_1989"/>
<dbReference type="HOGENOM" id="CLU_073529_0_1_6"/>
<dbReference type="GO" id="GO:0046872">
    <property type="term" value="F:metal ion binding"/>
    <property type="evidence" value="ECO:0007669"/>
    <property type="project" value="UniProtKB-KW"/>
</dbReference>
<dbReference type="GO" id="GO:0008237">
    <property type="term" value="F:metallopeptidase activity"/>
    <property type="evidence" value="ECO:0007669"/>
    <property type="project" value="UniProtKB-KW"/>
</dbReference>
<dbReference type="GO" id="GO:0006508">
    <property type="term" value="P:proteolysis"/>
    <property type="evidence" value="ECO:0007669"/>
    <property type="project" value="UniProtKB-KW"/>
</dbReference>
<dbReference type="CDD" id="cd08071">
    <property type="entry name" value="MPN_DUF2466"/>
    <property type="match status" value="1"/>
</dbReference>
<dbReference type="Gene3D" id="3.40.140.10">
    <property type="entry name" value="Cytidine Deaminase, domain 2"/>
    <property type="match status" value="1"/>
</dbReference>
<dbReference type="InterPro" id="IPR037518">
    <property type="entry name" value="MPN"/>
</dbReference>
<dbReference type="InterPro" id="IPR025657">
    <property type="entry name" value="RadC_JAB"/>
</dbReference>
<dbReference type="InterPro" id="IPR010994">
    <property type="entry name" value="RuvA_2-like"/>
</dbReference>
<dbReference type="InterPro" id="IPR001405">
    <property type="entry name" value="UPF0758"/>
</dbReference>
<dbReference type="InterPro" id="IPR020891">
    <property type="entry name" value="UPF0758_CS"/>
</dbReference>
<dbReference type="InterPro" id="IPR046778">
    <property type="entry name" value="UPF0758_N"/>
</dbReference>
<dbReference type="NCBIfam" id="NF000642">
    <property type="entry name" value="PRK00024.1"/>
    <property type="match status" value="1"/>
</dbReference>
<dbReference type="NCBIfam" id="TIGR00608">
    <property type="entry name" value="radc"/>
    <property type="match status" value="1"/>
</dbReference>
<dbReference type="PANTHER" id="PTHR30471">
    <property type="entry name" value="DNA REPAIR PROTEIN RADC"/>
    <property type="match status" value="1"/>
</dbReference>
<dbReference type="PANTHER" id="PTHR30471:SF3">
    <property type="entry name" value="UPF0758 PROTEIN YEES-RELATED"/>
    <property type="match status" value="1"/>
</dbReference>
<dbReference type="Pfam" id="PF04002">
    <property type="entry name" value="RadC"/>
    <property type="match status" value="1"/>
</dbReference>
<dbReference type="Pfam" id="PF20582">
    <property type="entry name" value="UPF0758_N"/>
    <property type="match status" value="1"/>
</dbReference>
<dbReference type="SUPFAM" id="SSF47781">
    <property type="entry name" value="RuvA domain 2-like"/>
    <property type="match status" value="1"/>
</dbReference>
<dbReference type="PROSITE" id="PS50249">
    <property type="entry name" value="MPN"/>
    <property type="match status" value="1"/>
</dbReference>
<dbReference type="PROSITE" id="PS01302">
    <property type="entry name" value="UPF0758"/>
    <property type="match status" value="1"/>
</dbReference>
<name>Y1989_LEGPC</name>
<comment type="similarity">
    <text evidence="2">Belongs to the UPF0758 family.</text>
</comment>
<keyword id="KW-0378">Hydrolase</keyword>
<keyword id="KW-0479">Metal-binding</keyword>
<keyword id="KW-0482">Metalloprotease</keyword>
<keyword id="KW-0645">Protease</keyword>
<keyword id="KW-0862">Zinc</keyword>
<protein>
    <recommendedName>
        <fullName>UPF0758 protein LPC_1989</fullName>
    </recommendedName>
</protein>
<feature type="chain" id="PRO_1000089820" description="UPF0758 protein LPC_1989">
    <location>
        <begin position="1"/>
        <end position="227"/>
    </location>
</feature>
<feature type="domain" description="MPN" evidence="1">
    <location>
        <begin position="102"/>
        <end position="225"/>
    </location>
</feature>
<feature type="short sequence motif" description="JAMM motif" evidence="1">
    <location>
        <begin position="173"/>
        <end position="186"/>
    </location>
</feature>
<feature type="binding site" evidence="1">
    <location>
        <position position="173"/>
    </location>
    <ligand>
        <name>Zn(2+)</name>
        <dbReference type="ChEBI" id="CHEBI:29105"/>
        <note>catalytic</note>
    </ligand>
</feature>
<feature type="binding site" evidence="1">
    <location>
        <position position="175"/>
    </location>
    <ligand>
        <name>Zn(2+)</name>
        <dbReference type="ChEBI" id="CHEBI:29105"/>
        <note>catalytic</note>
    </ligand>
</feature>
<feature type="binding site" evidence="1">
    <location>
        <position position="186"/>
    </location>
    <ligand>
        <name>Zn(2+)</name>
        <dbReference type="ChEBI" id="CHEBI:29105"/>
        <note>catalytic</note>
    </ligand>
</feature>
<proteinExistence type="inferred from homology"/>
<sequence>MMVAHTAQQLDLREKLLTNGVHSLSDIELLAVFISSGNNKKSCLQLAYELTKHLGNLRNILNADLQSFKSIHGLGEVRYAQLQAAKEICHRSDFIDLQKEIQLSNTQQTYAFLKKRLRDYKNETFAALFLDSQHRIIAYEELFSGTINTATVYPRPIVERVLQLNAAALILAHNHPSGLSDASQQDFAITERIRDALDLVDARLLDHIVIGDNEVYSIFAENKWVCN</sequence>
<evidence type="ECO:0000255" key="1">
    <source>
        <dbReference type="PROSITE-ProRule" id="PRU01182"/>
    </source>
</evidence>
<evidence type="ECO:0000305" key="2"/>
<reference key="1">
    <citation type="submission" date="2006-11" db="EMBL/GenBank/DDBJ databases">
        <title>Identification and characterization of a new conjugation/ type IVA secretion system (trb/tra) of L. pneumophila Corby localized on a mobile genomic island.</title>
        <authorList>
            <person name="Gloeckner G."/>
            <person name="Albert-Weissenberger C."/>
            <person name="Weinmann E."/>
            <person name="Jacobi S."/>
            <person name="Schunder E."/>
            <person name="Steinert M."/>
            <person name="Buchrieser C."/>
            <person name="Hacker J."/>
            <person name="Heuner K."/>
        </authorList>
    </citation>
    <scope>NUCLEOTIDE SEQUENCE [LARGE SCALE GENOMIC DNA]</scope>
    <source>
        <strain>Corby</strain>
    </source>
</reference>
<gene>
    <name type="ordered locus">LPC_1989</name>
</gene>
<accession>A5IEW9</accession>
<organism>
    <name type="scientific">Legionella pneumophila (strain Corby)</name>
    <dbReference type="NCBI Taxonomy" id="400673"/>
    <lineage>
        <taxon>Bacteria</taxon>
        <taxon>Pseudomonadati</taxon>
        <taxon>Pseudomonadota</taxon>
        <taxon>Gammaproteobacteria</taxon>
        <taxon>Legionellales</taxon>
        <taxon>Legionellaceae</taxon>
        <taxon>Legionella</taxon>
    </lineage>
</organism>